<comment type="function">
    <text evidence="1">Catalyzes the ATP-dependent amidation of deamido-NAD to form NAD. Uses ammonia as a nitrogen source.</text>
</comment>
<comment type="catalytic activity">
    <reaction evidence="1">
        <text>deamido-NAD(+) + NH4(+) + ATP = AMP + diphosphate + NAD(+) + H(+)</text>
        <dbReference type="Rhea" id="RHEA:21188"/>
        <dbReference type="ChEBI" id="CHEBI:15378"/>
        <dbReference type="ChEBI" id="CHEBI:28938"/>
        <dbReference type="ChEBI" id="CHEBI:30616"/>
        <dbReference type="ChEBI" id="CHEBI:33019"/>
        <dbReference type="ChEBI" id="CHEBI:57540"/>
        <dbReference type="ChEBI" id="CHEBI:58437"/>
        <dbReference type="ChEBI" id="CHEBI:456215"/>
        <dbReference type="EC" id="6.3.1.5"/>
    </reaction>
</comment>
<comment type="pathway">
    <text evidence="1">Cofactor biosynthesis; NAD(+) biosynthesis; NAD(+) from deamido-NAD(+) (ammonia route): step 1/1.</text>
</comment>
<comment type="subunit">
    <text evidence="1">Homodimer.</text>
</comment>
<comment type="similarity">
    <text evidence="1">Belongs to the NAD synthetase family.</text>
</comment>
<reference key="1">
    <citation type="journal article" date="2002" name="J. Bacteriol.">
        <title>Genome sequence and analysis of the oral bacterium Fusobacterium nucleatum strain ATCC 25586.</title>
        <authorList>
            <person name="Kapatral V."/>
            <person name="Anderson I."/>
            <person name="Ivanova N."/>
            <person name="Reznik G."/>
            <person name="Los T."/>
            <person name="Lykidis A."/>
            <person name="Bhattacharyya A."/>
            <person name="Bartman A."/>
            <person name="Gardner W."/>
            <person name="Grechkin G."/>
            <person name="Zhu L."/>
            <person name="Vasieva O."/>
            <person name="Chu L."/>
            <person name="Kogan Y."/>
            <person name="Chaga O."/>
            <person name="Goltsman E."/>
            <person name="Bernal A."/>
            <person name="Larsen N."/>
            <person name="D'Souza M."/>
            <person name="Walunas T."/>
            <person name="Pusch G."/>
            <person name="Haselkorn R."/>
            <person name="Fonstein M."/>
            <person name="Kyrpides N.C."/>
            <person name="Overbeek R."/>
        </authorList>
    </citation>
    <scope>NUCLEOTIDE SEQUENCE [LARGE SCALE GENOMIC DNA]</scope>
    <source>
        <strain>ATCC 25586 / DSM 15643 / BCRC 10681 / CIP 101130 / JCM 8532 / KCTC 2640 / LMG 13131 / VPI 4355</strain>
    </source>
</reference>
<name>NADE_FUSNN</name>
<proteinExistence type="inferred from homology"/>
<sequence length="258" mass="29493">MNKLDLNLKEVHNELVEFLRENFKKAGFSKAVLGLSGGIDSALVAYLLRDALGKENVLAIMMPYKSSNPDSLNHAKLVVEDLKINSKTIEITDMIDAYFKNEKEATSLRMGNKMARERMSILFDYSSKENALVVGTSNKTEIYLGYSTQFGDAACALNPIGDLYKTNIWDLSRYLKIPNELIEKKPSADLWEGQTDEQEMGLTYKEADQVMYRLLEENKTVEEVLAEGFNKDLVDNIVRRMNRSEYKRRMPLIAKIKR</sequence>
<keyword id="KW-0067">ATP-binding</keyword>
<keyword id="KW-0436">Ligase</keyword>
<keyword id="KW-0460">Magnesium</keyword>
<keyword id="KW-0479">Metal-binding</keyword>
<keyword id="KW-0520">NAD</keyword>
<keyword id="KW-0547">Nucleotide-binding</keyword>
<keyword id="KW-1185">Reference proteome</keyword>
<evidence type="ECO:0000255" key="1">
    <source>
        <dbReference type="HAMAP-Rule" id="MF_00193"/>
    </source>
</evidence>
<accession>Q8REA7</accession>
<dbReference type="EC" id="6.3.1.5" evidence="1"/>
<dbReference type="EMBL" id="AE009951">
    <property type="protein sequence ID" value="AAL95398.1"/>
    <property type="molecule type" value="Genomic_DNA"/>
</dbReference>
<dbReference type="RefSeq" id="NP_604099.1">
    <property type="nucleotide sequence ID" value="NC_003454.1"/>
</dbReference>
<dbReference type="RefSeq" id="WP_005903173.1">
    <property type="nucleotide sequence ID" value="NZ_OZ209243.1"/>
</dbReference>
<dbReference type="SMR" id="Q8REA7"/>
<dbReference type="FunCoup" id="Q8REA7">
    <property type="interactions" value="83"/>
</dbReference>
<dbReference type="STRING" id="190304.FN1202"/>
<dbReference type="PaxDb" id="190304-FN1202"/>
<dbReference type="EnsemblBacteria" id="AAL95398">
    <property type="protein sequence ID" value="AAL95398"/>
    <property type="gene ID" value="FN1202"/>
</dbReference>
<dbReference type="KEGG" id="fnu:FN1202"/>
<dbReference type="PATRIC" id="fig|190304.8.peg.1765"/>
<dbReference type="eggNOG" id="COG0171">
    <property type="taxonomic scope" value="Bacteria"/>
</dbReference>
<dbReference type="HOGENOM" id="CLU_059327_1_1_0"/>
<dbReference type="InParanoid" id="Q8REA7"/>
<dbReference type="BioCyc" id="FNUC190304:G1FZS-1779-MONOMER"/>
<dbReference type="UniPathway" id="UPA00253">
    <property type="reaction ID" value="UER00333"/>
</dbReference>
<dbReference type="Proteomes" id="UP000002521">
    <property type="component" value="Chromosome"/>
</dbReference>
<dbReference type="GO" id="GO:0005737">
    <property type="term" value="C:cytoplasm"/>
    <property type="evidence" value="ECO:0000318"/>
    <property type="project" value="GO_Central"/>
</dbReference>
<dbReference type="GO" id="GO:0005524">
    <property type="term" value="F:ATP binding"/>
    <property type="evidence" value="ECO:0007669"/>
    <property type="project" value="UniProtKB-UniRule"/>
</dbReference>
<dbReference type="GO" id="GO:0004359">
    <property type="term" value="F:glutaminase activity"/>
    <property type="evidence" value="ECO:0007669"/>
    <property type="project" value="InterPro"/>
</dbReference>
<dbReference type="GO" id="GO:0046872">
    <property type="term" value="F:metal ion binding"/>
    <property type="evidence" value="ECO:0007669"/>
    <property type="project" value="UniProtKB-KW"/>
</dbReference>
<dbReference type="GO" id="GO:0003952">
    <property type="term" value="F:NAD+ synthase (glutamine-hydrolyzing) activity"/>
    <property type="evidence" value="ECO:0007669"/>
    <property type="project" value="InterPro"/>
</dbReference>
<dbReference type="GO" id="GO:0008795">
    <property type="term" value="F:NAD+ synthase activity"/>
    <property type="evidence" value="ECO:0007669"/>
    <property type="project" value="UniProtKB-UniRule"/>
</dbReference>
<dbReference type="GO" id="GO:0009435">
    <property type="term" value="P:NAD biosynthetic process"/>
    <property type="evidence" value="ECO:0000318"/>
    <property type="project" value="GO_Central"/>
</dbReference>
<dbReference type="CDD" id="cd00553">
    <property type="entry name" value="NAD_synthase"/>
    <property type="match status" value="1"/>
</dbReference>
<dbReference type="FunFam" id="3.40.50.620:FF:000106">
    <property type="entry name" value="Glutamine-dependent NAD(+) synthetase"/>
    <property type="match status" value="1"/>
</dbReference>
<dbReference type="Gene3D" id="3.40.50.620">
    <property type="entry name" value="HUPs"/>
    <property type="match status" value="1"/>
</dbReference>
<dbReference type="HAMAP" id="MF_00193">
    <property type="entry name" value="NadE_ammonia_dep"/>
    <property type="match status" value="1"/>
</dbReference>
<dbReference type="InterPro" id="IPR022310">
    <property type="entry name" value="NAD/GMP_synthase"/>
</dbReference>
<dbReference type="InterPro" id="IPR003694">
    <property type="entry name" value="NAD_synthase"/>
</dbReference>
<dbReference type="InterPro" id="IPR022926">
    <property type="entry name" value="NH(3)-dep_NAD(+)_synth"/>
</dbReference>
<dbReference type="InterPro" id="IPR014729">
    <property type="entry name" value="Rossmann-like_a/b/a_fold"/>
</dbReference>
<dbReference type="NCBIfam" id="TIGR00552">
    <property type="entry name" value="nadE"/>
    <property type="match status" value="1"/>
</dbReference>
<dbReference type="NCBIfam" id="NF010587">
    <property type="entry name" value="PRK13980.1"/>
    <property type="match status" value="1"/>
</dbReference>
<dbReference type="PANTHER" id="PTHR23090:SF9">
    <property type="entry name" value="GLUTAMINE-DEPENDENT NAD(+) SYNTHETASE"/>
    <property type="match status" value="1"/>
</dbReference>
<dbReference type="PANTHER" id="PTHR23090">
    <property type="entry name" value="NH 3 /GLUTAMINE-DEPENDENT NAD + SYNTHETASE"/>
    <property type="match status" value="1"/>
</dbReference>
<dbReference type="Pfam" id="PF02540">
    <property type="entry name" value="NAD_synthase"/>
    <property type="match status" value="1"/>
</dbReference>
<dbReference type="SUPFAM" id="SSF52402">
    <property type="entry name" value="Adenine nucleotide alpha hydrolases-like"/>
    <property type="match status" value="1"/>
</dbReference>
<organism>
    <name type="scientific">Fusobacterium nucleatum subsp. nucleatum (strain ATCC 25586 / DSM 15643 / BCRC 10681 / CIP 101130 / JCM 8532 / KCTC 2640 / LMG 13131 / VPI 4355)</name>
    <dbReference type="NCBI Taxonomy" id="190304"/>
    <lineage>
        <taxon>Bacteria</taxon>
        <taxon>Fusobacteriati</taxon>
        <taxon>Fusobacteriota</taxon>
        <taxon>Fusobacteriia</taxon>
        <taxon>Fusobacteriales</taxon>
        <taxon>Fusobacteriaceae</taxon>
        <taxon>Fusobacterium</taxon>
    </lineage>
</organism>
<protein>
    <recommendedName>
        <fullName evidence="1">NH(3)-dependent NAD(+) synthetase</fullName>
        <ecNumber evidence="1">6.3.1.5</ecNumber>
    </recommendedName>
</protein>
<feature type="chain" id="PRO_0000152171" description="NH(3)-dependent NAD(+) synthetase">
    <location>
        <begin position="1"/>
        <end position="258"/>
    </location>
</feature>
<feature type="binding site" evidence="1">
    <location>
        <begin position="34"/>
        <end position="41"/>
    </location>
    <ligand>
        <name>ATP</name>
        <dbReference type="ChEBI" id="CHEBI:30616"/>
    </ligand>
</feature>
<feature type="binding site" evidence="1">
    <location>
        <position position="40"/>
    </location>
    <ligand>
        <name>Mg(2+)</name>
        <dbReference type="ChEBI" id="CHEBI:18420"/>
    </ligand>
</feature>
<feature type="binding site" evidence="1">
    <location>
        <position position="116"/>
    </location>
    <ligand>
        <name>deamido-NAD(+)</name>
        <dbReference type="ChEBI" id="CHEBI:58437"/>
    </ligand>
</feature>
<feature type="binding site" evidence="1">
    <location>
        <position position="136"/>
    </location>
    <ligand>
        <name>ATP</name>
        <dbReference type="ChEBI" id="CHEBI:30616"/>
    </ligand>
</feature>
<feature type="binding site" evidence="1">
    <location>
        <position position="141"/>
    </location>
    <ligand>
        <name>Mg(2+)</name>
        <dbReference type="ChEBI" id="CHEBI:18420"/>
    </ligand>
</feature>
<feature type="binding site" evidence="1">
    <location>
        <position position="165"/>
    </location>
    <ligand>
        <name>ATP</name>
        <dbReference type="ChEBI" id="CHEBI:30616"/>
    </ligand>
</feature>
<feature type="binding site" evidence="1">
    <location>
        <position position="187"/>
    </location>
    <ligand>
        <name>ATP</name>
        <dbReference type="ChEBI" id="CHEBI:30616"/>
    </ligand>
</feature>
<gene>
    <name evidence="1" type="primary">nadE</name>
    <name type="ordered locus">FN1202</name>
</gene>